<keyword id="KW-0413">Isomerase</keyword>
<keyword id="KW-0479">Metal-binding</keyword>
<keyword id="KW-0520">NAD</keyword>
<keyword id="KW-0521">NADP</keyword>
<keyword id="KW-0547">Nucleotide-binding</keyword>
<keyword id="KW-0630">Potassium</keyword>
<keyword id="KW-1185">Reference proteome</keyword>
<comment type="function">
    <text evidence="1">Catalyzes the epimerization of the S- and R-forms of NAD(P)HX, a damaged form of NAD(P)H that is a result of enzymatic or heat-dependent hydration. This is a prerequisite for the S-specific NAD(P)H-hydrate dehydratase to allow the repair of both epimers of NAD(P)HX.</text>
</comment>
<comment type="catalytic activity">
    <reaction>
        <text>(6R)-NADHX = (6S)-NADHX</text>
        <dbReference type="Rhea" id="RHEA:32215"/>
        <dbReference type="ChEBI" id="CHEBI:64074"/>
        <dbReference type="ChEBI" id="CHEBI:64075"/>
        <dbReference type="EC" id="5.1.99.6"/>
    </reaction>
</comment>
<comment type="catalytic activity">
    <reaction>
        <text>(6R)-NADPHX = (6S)-NADPHX</text>
        <dbReference type="Rhea" id="RHEA:32227"/>
        <dbReference type="ChEBI" id="CHEBI:64076"/>
        <dbReference type="ChEBI" id="CHEBI:64077"/>
        <dbReference type="EC" id="5.1.99.6"/>
    </reaction>
</comment>
<comment type="cofactor">
    <cofactor evidence="1">
        <name>K(+)</name>
        <dbReference type="ChEBI" id="CHEBI:29103"/>
    </cofactor>
    <text evidence="1">Binds 1 potassium ion per subunit.</text>
</comment>
<comment type="similarity">
    <text evidence="1">Belongs to the NnrE/AIBP family.</text>
</comment>
<gene>
    <name type="ORF">PHUM009640</name>
</gene>
<feature type="chain" id="PRO_0000416320" description="NAD(P)H-hydrate epimerase">
    <location>
        <begin position="1"/>
        <end position="228"/>
    </location>
</feature>
<feature type="domain" description="YjeF N-terminal" evidence="1">
    <location>
        <begin position="10"/>
        <end position="214"/>
    </location>
</feature>
<feature type="binding site" evidence="1">
    <location>
        <begin position="58"/>
        <end position="62"/>
    </location>
    <ligand>
        <name>(6S)-NADPHX</name>
        <dbReference type="ChEBI" id="CHEBI:64076"/>
    </ligand>
</feature>
<feature type="binding site" evidence="1">
    <location>
        <position position="59"/>
    </location>
    <ligand>
        <name>K(+)</name>
        <dbReference type="ChEBI" id="CHEBI:29103"/>
    </ligand>
</feature>
<feature type="binding site" evidence="1">
    <location>
        <position position="123"/>
    </location>
    <ligand>
        <name>K(+)</name>
        <dbReference type="ChEBI" id="CHEBI:29103"/>
    </ligand>
</feature>
<feature type="binding site" evidence="1">
    <location>
        <begin position="127"/>
        <end position="133"/>
    </location>
    <ligand>
        <name>(6S)-NADPHX</name>
        <dbReference type="ChEBI" id="CHEBI:64076"/>
    </ligand>
</feature>
<feature type="binding site" evidence="1">
    <location>
        <position position="156"/>
    </location>
    <ligand>
        <name>(6S)-NADPHX</name>
        <dbReference type="ChEBI" id="CHEBI:64076"/>
    </ligand>
</feature>
<feature type="binding site" evidence="1">
    <location>
        <position position="159"/>
    </location>
    <ligand>
        <name>K(+)</name>
        <dbReference type="ChEBI" id="CHEBI:29103"/>
    </ligand>
</feature>
<name>NNRE_PEDHC</name>
<accession>E0V9D8</accession>
<dbReference type="EC" id="5.1.99.6"/>
<dbReference type="EMBL" id="DS234992">
    <property type="protein sequence ID" value="EEB09994.1"/>
    <property type="molecule type" value="Genomic_DNA"/>
</dbReference>
<dbReference type="RefSeq" id="XP_002422732.1">
    <property type="nucleotide sequence ID" value="XM_002422687.1"/>
</dbReference>
<dbReference type="SMR" id="E0V9D8"/>
<dbReference type="FunCoup" id="E0V9D8">
    <property type="interactions" value="1248"/>
</dbReference>
<dbReference type="STRING" id="121224.E0V9D8"/>
<dbReference type="EnsemblMetazoa" id="PHUM009640-RA">
    <property type="protein sequence ID" value="PHUM009640-PA"/>
    <property type="gene ID" value="PHUM009640"/>
</dbReference>
<dbReference type="KEGG" id="phu:Phum_PHUM009640"/>
<dbReference type="CTD" id="8233693"/>
<dbReference type="VEuPathDB" id="VectorBase:PHUM009640"/>
<dbReference type="eggNOG" id="KOG2585">
    <property type="taxonomic scope" value="Eukaryota"/>
</dbReference>
<dbReference type="HOGENOM" id="CLU_024853_3_0_1"/>
<dbReference type="InParanoid" id="E0V9D8"/>
<dbReference type="OMA" id="SMFRGRY"/>
<dbReference type="OrthoDB" id="10064708at2759"/>
<dbReference type="PhylomeDB" id="E0V9D8"/>
<dbReference type="Proteomes" id="UP000009046">
    <property type="component" value="Unassembled WGS sequence"/>
</dbReference>
<dbReference type="GO" id="GO:0005739">
    <property type="term" value="C:mitochondrion"/>
    <property type="evidence" value="ECO:0007669"/>
    <property type="project" value="TreeGrafter"/>
</dbReference>
<dbReference type="GO" id="GO:0046872">
    <property type="term" value="F:metal ion binding"/>
    <property type="evidence" value="ECO:0007669"/>
    <property type="project" value="UniProtKB-KW"/>
</dbReference>
<dbReference type="GO" id="GO:0052856">
    <property type="term" value="F:NAD(P)HX epimerase activity"/>
    <property type="evidence" value="ECO:0007669"/>
    <property type="project" value="UniProtKB-UniRule"/>
</dbReference>
<dbReference type="GO" id="GO:0000166">
    <property type="term" value="F:nucleotide binding"/>
    <property type="evidence" value="ECO:0007669"/>
    <property type="project" value="UniProtKB-KW"/>
</dbReference>
<dbReference type="FunFam" id="3.40.50.10260:FF:000002">
    <property type="entry name" value="NAD(P)H-hydrate epimerase"/>
    <property type="match status" value="1"/>
</dbReference>
<dbReference type="Gene3D" id="3.40.50.10260">
    <property type="entry name" value="YjeF N-terminal domain"/>
    <property type="match status" value="1"/>
</dbReference>
<dbReference type="HAMAP" id="MF_01966">
    <property type="entry name" value="NADHX_epimerase"/>
    <property type="match status" value="1"/>
</dbReference>
<dbReference type="InterPro" id="IPR004443">
    <property type="entry name" value="YjeF_N_dom"/>
</dbReference>
<dbReference type="InterPro" id="IPR036652">
    <property type="entry name" value="YjeF_N_dom_sf"/>
</dbReference>
<dbReference type="InterPro" id="IPR032976">
    <property type="entry name" value="YJEFN_prot_NAXE-like"/>
</dbReference>
<dbReference type="NCBIfam" id="TIGR00197">
    <property type="entry name" value="yjeF_nterm"/>
    <property type="match status" value="1"/>
</dbReference>
<dbReference type="PANTHER" id="PTHR13232">
    <property type="entry name" value="NAD(P)H-HYDRATE EPIMERASE"/>
    <property type="match status" value="1"/>
</dbReference>
<dbReference type="PANTHER" id="PTHR13232:SF10">
    <property type="entry name" value="NAD(P)H-HYDRATE EPIMERASE"/>
    <property type="match status" value="1"/>
</dbReference>
<dbReference type="Pfam" id="PF03853">
    <property type="entry name" value="YjeF_N"/>
    <property type="match status" value="1"/>
</dbReference>
<dbReference type="SUPFAM" id="SSF64153">
    <property type="entry name" value="YjeF N-terminal domain-like"/>
    <property type="match status" value="1"/>
</dbReference>
<dbReference type="PROSITE" id="PS51385">
    <property type="entry name" value="YJEF_N"/>
    <property type="match status" value="1"/>
</dbReference>
<organism>
    <name type="scientific">Pediculus humanus subsp. corporis</name>
    <name type="common">Body louse</name>
    <dbReference type="NCBI Taxonomy" id="121224"/>
    <lineage>
        <taxon>Eukaryota</taxon>
        <taxon>Metazoa</taxon>
        <taxon>Ecdysozoa</taxon>
        <taxon>Arthropoda</taxon>
        <taxon>Hexapoda</taxon>
        <taxon>Insecta</taxon>
        <taxon>Pterygota</taxon>
        <taxon>Neoptera</taxon>
        <taxon>Paraneoptera</taxon>
        <taxon>Psocodea</taxon>
        <taxon>Phthiraptera</taxon>
        <taxon>Anoplura</taxon>
        <taxon>Pediculidae</taxon>
        <taxon>Pediculus</taxon>
    </lineage>
</organism>
<proteinExistence type="inferred from homology"/>
<sequence>MVRYLSQQEAIDIDQELFNVYKYSVDQLMELAGLSCSIAIYKCYSKLKKILVCCGPGNNGGDGLVAARHLKLFGFEPSVYYPKRTEKPLYQNLTHQCLAMKIDFLNDIPDAKEMSNNYELIVDALFGFSFKPPVRPEFEKVMNVLGKSKVPICSIDIPSGWDVENGCPENGILPDMLISLTAPKKCAKFFNGRFHYLGGRFVPPDLERKYDLKINSEYSGTECCVQLK</sequence>
<evidence type="ECO:0000255" key="1">
    <source>
        <dbReference type="HAMAP-Rule" id="MF_03159"/>
    </source>
</evidence>
<protein>
    <recommendedName>
        <fullName evidence="1">NAD(P)H-hydrate epimerase</fullName>
        <ecNumber>5.1.99.6</ecNumber>
    </recommendedName>
    <alternativeName>
        <fullName evidence="1">NAD(P)HX epimerase</fullName>
    </alternativeName>
</protein>
<reference key="1">
    <citation type="journal article" date="2010" name="Proc. Natl. Acad. Sci. U.S.A.">
        <title>Genome sequences of the human body louse and its primary endosymbiont provide insights into the permanent parasitic lifestyle.</title>
        <authorList>
            <person name="Kirkness E.F."/>
            <person name="Haas B.J."/>
            <person name="Sun W."/>
            <person name="Braig H.R."/>
            <person name="Perotti M.A."/>
            <person name="Clark J.M."/>
            <person name="Lee S.H."/>
            <person name="Robertson H.M."/>
            <person name="Kennedy R.C."/>
            <person name="Elhaik E."/>
            <person name="Gerlach D."/>
            <person name="Kriventseva E.V."/>
            <person name="Elsik C.G."/>
            <person name="Graur D."/>
            <person name="Hill C.A."/>
            <person name="Veenstra J.A."/>
            <person name="Walenz B."/>
            <person name="Tubio J.M."/>
            <person name="Ribeiro J.M."/>
            <person name="Rozas J."/>
            <person name="Johnston J.S."/>
            <person name="Reese J.T."/>
            <person name="Popadic A."/>
            <person name="Tojo M."/>
            <person name="Raoult D."/>
            <person name="Reed D.L."/>
            <person name="Tomoyasu Y."/>
            <person name="Krause E."/>
            <person name="Mittapalli O."/>
            <person name="Margam V.M."/>
            <person name="Li H.M."/>
            <person name="Meyer J.M."/>
            <person name="Johnson R.M."/>
            <person name="Romero-Severson J."/>
            <person name="Vanzee J.P."/>
            <person name="Alvarez-Ponce D."/>
            <person name="Vieira F.G."/>
            <person name="Aguade M."/>
            <person name="Guirao-Rico S."/>
            <person name="Anzola J.M."/>
            <person name="Yoon K.S."/>
            <person name="Strycharz J.P."/>
            <person name="Unger M.F."/>
            <person name="Christley S."/>
            <person name="Lobo N.F."/>
            <person name="Seufferheld M.J."/>
            <person name="Wang N."/>
            <person name="Dasch G.A."/>
            <person name="Struchiner C.J."/>
            <person name="Madey G."/>
            <person name="Hannick L.I."/>
            <person name="Bidwell S."/>
            <person name="Joardar V."/>
            <person name="Caler E."/>
            <person name="Shao R."/>
            <person name="Barker S.C."/>
            <person name="Cameron S."/>
            <person name="Bruggner R.V."/>
            <person name="Regier A."/>
            <person name="Johnson J."/>
            <person name="Viswanathan L."/>
            <person name="Utterback T.R."/>
            <person name="Sutton G.G."/>
            <person name="Lawson D."/>
            <person name="Waterhouse R.M."/>
            <person name="Venter J.C."/>
            <person name="Strausberg R.L."/>
            <person name="Berenbaum M.R."/>
            <person name="Collins F.H."/>
            <person name="Zdobnov E.M."/>
            <person name="Pittendrigh B.R."/>
        </authorList>
    </citation>
    <scope>NUCLEOTIDE SEQUENCE [LARGE SCALE GENOMIC DNA]</scope>
    <source>
        <strain>USDA</strain>
    </source>
</reference>